<protein>
    <recommendedName>
        <fullName>Alpha-2-HS-glycoprotein</fullName>
    </recommendedName>
    <alternativeName>
        <fullName>Fetuin-A</fullName>
    </alternativeName>
</protein>
<sequence>MKSFLLLFCLAQLCSCRSIPLDPIAGYKEPACDDPDTEQAALAAVDYINKHLPRGYKHTLNQIDSVKVWPRRPTGEVYDIEIDTLETTCHVLDPTPLVNCSVRQQTEHAVEGDCDIHVLKQDGQFSVLFTKCDSSPDSAEDVRKLCPDCPLLAPLNNSQVVHAAEVALATFNAQNNGSYFQLVEISRAQFVPLPGSVSVEFAVAATDCIAKEVVDPTKCNLLAEKQYGFCKGSVIQKALGGEDVTVTCTLFQTQPVIPQPQPEGAEAGAPSAVPDAAVPDAAVPAPSAAGLPVGSVVAGPSVVAVPLPLHRAHYDLRHTFSGVASVESASGEAFHVGKTPIVGQPSVPGGPVHLCPGRIRYFKI</sequence>
<feature type="signal peptide" description="Or 17" evidence="6">
    <location>
        <begin position="1"/>
        <end position="15"/>
    </location>
</feature>
<feature type="chain" id="PRO_0000008898" description="Alpha-2-HS-glycoprotein">
    <location>
        <begin position="16"/>
        <end position="364"/>
    </location>
</feature>
<feature type="domain" description="Cystatin fetuin-A-type 1" evidence="5">
    <location>
        <begin position="27"/>
        <end position="133"/>
    </location>
</feature>
<feature type="domain" description="Cystatin fetuin-A-type 2" evidence="5">
    <location>
        <begin position="144"/>
        <end position="256"/>
    </location>
</feature>
<feature type="modified residue" description="Phosphoserine" evidence="1">
    <location>
        <position position="134"/>
    </location>
</feature>
<feature type="modified residue" description="Phosphoserine" evidence="1">
    <location>
        <position position="135"/>
    </location>
</feature>
<feature type="modified residue" description="Phosphoserine" evidence="1">
    <location>
        <position position="138"/>
    </location>
</feature>
<feature type="modified residue" description="Phosphothreonine" evidence="1">
    <location>
        <position position="319"/>
    </location>
</feature>
<feature type="modified residue" description="Phosphoserine" evidence="3">
    <location>
        <position position="321"/>
    </location>
</feature>
<feature type="modified residue" description="Phosphoserine" evidence="1">
    <location>
        <position position="325"/>
    </location>
</feature>
<feature type="modified residue" description="Phosphoserine" evidence="1">
    <location>
        <position position="328"/>
    </location>
</feature>
<feature type="modified residue" description="Phosphoserine" evidence="1">
    <location>
        <position position="330"/>
    </location>
</feature>
<feature type="glycosylation site" description="N-linked (GlcNAc...) asparagine" evidence="4">
    <location>
        <position position="99"/>
    </location>
</feature>
<feature type="glycosylation site" description="N-linked (GlcNAc...) asparagine" evidence="4">
    <location>
        <position position="156"/>
    </location>
</feature>
<feature type="glycosylation site" description="N-linked (GlcNAc...) asparagine" evidence="4">
    <location>
        <position position="176"/>
    </location>
</feature>
<feature type="glycosylation site" description="O-linked (GalNAc...) serine" evidence="2">
    <location>
        <position position="301"/>
    </location>
</feature>
<feature type="glycosylation site" description="O-linked (GalNAc...) threonine" evidence="2">
    <location>
        <position position="339"/>
    </location>
</feature>
<feature type="disulfide bond" evidence="5">
    <location>
        <begin position="32"/>
        <end position="355"/>
    </location>
</feature>
<feature type="disulfide bond" evidence="5">
    <location>
        <begin position="89"/>
        <end position="100"/>
    </location>
</feature>
<feature type="disulfide bond" evidence="5">
    <location>
        <begin position="114"/>
        <end position="132"/>
    </location>
</feature>
<feature type="disulfide bond" evidence="5">
    <location>
        <begin position="146"/>
        <end position="149"/>
    </location>
</feature>
<feature type="disulfide bond" evidence="5">
    <location>
        <begin position="208"/>
        <end position="219"/>
    </location>
</feature>
<feature type="disulfide bond" evidence="5">
    <location>
        <begin position="230"/>
        <end position="248"/>
    </location>
</feature>
<feature type="sequence variant" description="In 60 to 70% of the chains.">
    <location>
        <begin position="16"/>
        <end position="17"/>
    </location>
</feature>
<evidence type="ECO:0000250" key="1">
    <source>
        <dbReference type="UniProtKB" id="P02765"/>
    </source>
</evidence>
<evidence type="ECO:0000250" key="2">
    <source>
        <dbReference type="UniProtKB" id="P12763"/>
    </source>
</evidence>
<evidence type="ECO:0000250" key="3">
    <source>
        <dbReference type="UniProtKB" id="P24090"/>
    </source>
</evidence>
<evidence type="ECO:0000255" key="4"/>
<evidence type="ECO:0000255" key="5">
    <source>
        <dbReference type="PROSITE-ProRule" id="PRU00861"/>
    </source>
</evidence>
<evidence type="ECO:0000269" key="6">
    <source>
    </source>
</evidence>
<reference key="1">
    <citation type="journal article" date="1992" name="Eur. J. Biochem.">
        <title>The nucleotide and deduced amino acid structures of sheep and pig fetuin. Common structural features of the mammalian fetuin family.</title>
        <authorList>
            <person name="Brown W.M."/>
            <person name="Christie D.L."/>
            <person name="Saunders N.R."/>
            <person name="Nawratil P."/>
            <person name="Dziegielewska K.D."/>
            <person name="Mueller-Esterl W."/>
        </authorList>
    </citation>
    <scope>NUCLEOTIDE SEQUENCE [MRNA]</scope>
    <scope>PROTEIN SEQUENCE OF 16-23</scope>
    <source>
        <tissue>Liver</tissue>
    </source>
</reference>
<accession>P29701</accession>
<dbReference type="EMBL" id="X16578">
    <property type="protein sequence ID" value="CAA34597.1"/>
    <property type="molecule type" value="mRNA"/>
</dbReference>
<dbReference type="PIR" id="S22394">
    <property type="entry name" value="S22394"/>
</dbReference>
<dbReference type="RefSeq" id="NP_001009802.1">
    <property type="nucleotide sequence ID" value="NM_001009802.1"/>
</dbReference>
<dbReference type="SMR" id="P29701"/>
<dbReference type="STRING" id="9940.ENSOARP00000022056"/>
<dbReference type="MEROPS" id="I25.020"/>
<dbReference type="MEROPS" id="I25.021"/>
<dbReference type="GlyCosmos" id="P29701">
    <property type="glycosylation" value="5 sites, No reported glycans"/>
</dbReference>
<dbReference type="PaxDb" id="9940-ENSOARP00000022056"/>
<dbReference type="Ensembl" id="ENSOART00025028287">
    <property type="protein sequence ID" value="ENSOARP00025013652"/>
    <property type="gene ID" value="ENSOARG00025017321"/>
</dbReference>
<dbReference type="Ensembl" id="ENSOART00040025056">
    <property type="protein sequence ID" value="ENSOARP00040012767"/>
    <property type="gene ID" value="ENSOARG00040015253"/>
</dbReference>
<dbReference type="Ensembl" id="ENSOART00215026241">
    <property type="protein sequence ID" value="ENSOARP00215013780"/>
    <property type="gene ID" value="ENSOARG00215015624"/>
</dbReference>
<dbReference type="Ensembl" id="ENSOART00220058656">
    <property type="protein sequence ID" value="ENSOARP00220031438"/>
    <property type="gene ID" value="ENSOARG00220035383"/>
</dbReference>
<dbReference type="Ensembl" id="ENSOART00260020695">
    <property type="protein sequence ID" value="ENSOARP00260010204"/>
    <property type="gene ID" value="ENSOARG00260012852"/>
</dbReference>
<dbReference type="GeneID" id="443392"/>
<dbReference type="KEGG" id="oas:443392"/>
<dbReference type="CTD" id="197"/>
<dbReference type="eggNOG" id="ENOG502RYRI">
    <property type="taxonomic scope" value="Eukaryota"/>
</dbReference>
<dbReference type="OrthoDB" id="8780871at2759"/>
<dbReference type="Proteomes" id="UP000002356">
    <property type="component" value="Unplaced"/>
</dbReference>
<dbReference type="GO" id="GO:0072562">
    <property type="term" value="C:blood microparticle"/>
    <property type="evidence" value="ECO:0007669"/>
    <property type="project" value="TreeGrafter"/>
</dbReference>
<dbReference type="GO" id="GO:0031012">
    <property type="term" value="C:extracellular matrix"/>
    <property type="evidence" value="ECO:0007669"/>
    <property type="project" value="TreeGrafter"/>
</dbReference>
<dbReference type="GO" id="GO:0004869">
    <property type="term" value="F:cysteine-type endopeptidase inhibitor activity"/>
    <property type="evidence" value="ECO:0007669"/>
    <property type="project" value="InterPro"/>
</dbReference>
<dbReference type="GO" id="GO:0006953">
    <property type="term" value="P:acute-phase response"/>
    <property type="evidence" value="ECO:0000250"/>
    <property type="project" value="UniProtKB"/>
</dbReference>
<dbReference type="GO" id="GO:0030502">
    <property type="term" value="P:negative regulation of bone mineralization"/>
    <property type="evidence" value="ECO:0000250"/>
    <property type="project" value="UniProtKB"/>
</dbReference>
<dbReference type="GO" id="GO:0050766">
    <property type="term" value="P:positive regulation of phagocytosis"/>
    <property type="evidence" value="ECO:0000250"/>
    <property type="project" value="UniProtKB"/>
</dbReference>
<dbReference type="GO" id="GO:0050727">
    <property type="term" value="P:regulation of inflammatory response"/>
    <property type="evidence" value="ECO:0000250"/>
    <property type="project" value="UniProtKB"/>
</dbReference>
<dbReference type="CDD" id="cd00042">
    <property type="entry name" value="CY"/>
    <property type="match status" value="2"/>
</dbReference>
<dbReference type="FunFam" id="3.10.450.10:FF:000010">
    <property type="entry name" value="Alpha-2-HS-glycoprotein"/>
    <property type="match status" value="1"/>
</dbReference>
<dbReference type="FunFam" id="3.10.450.10:FF:000009">
    <property type="entry name" value="Alpha-2-HS-glycoprotein 2"/>
    <property type="match status" value="1"/>
</dbReference>
<dbReference type="Gene3D" id="3.10.450.10">
    <property type="match status" value="2"/>
</dbReference>
<dbReference type="InterPro" id="IPR000010">
    <property type="entry name" value="Cystatin_dom"/>
</dbReference>
<dbReference type="InterPro" id="IPR025760">
    <property type="entry name" value="Cystatin_Fetuin_A"/>
</dbReference>
<dbReference type="InterPro" id="IPR046350">
    <property type="entry name" value="Cystatin_sf"/>
</dbReference>
<dbReference type="InterPro" id="IPR050735">
    <property type="entry name" value="Kininogen_Fetuin_HRG"/>
</dbReference>
<dbReference type="InterPro" id="IPR001363">
    <property type="entry name" value="Prot_inh_fetuin_CS"/>
</dbReference>
<dbReference type="PANTHER" id="PTHR13814:SF6">
    <property type="entry name" value="ALPHA-2-HS-GLYCOPROTEIN"/>
    <property type="match status" value="1"/>
</dbReference>
<dbReference type="PANTHER" id="PTHR13814">
    <property type="entry name" value="FETUIN"/>
    <property type="match status" value="1"/>
</dbReference>
<dbReference type="Pfam" id="PF00031">
    <property type="entry name" value="Cystatin"/>
    <property type="match status" value="1"/>
</dbReference>
<dbReference type="SMART" id="SM00043">
    <property type="entry name" value="CY"/>
    <property type="match status" value="2"/>
</dbReference>
<dbReference type="SUPFAM" id="SSF54403">
    <property type="entry name" value="Cystatin/monellin"/>
    <property type="match status" value="2"/>
</dbReference>
<dbReference type="PROSITE" id="PS51529">
    <property type="entry name" value="CYSTATIN_FETUIN_A"/>
    <property type="match status" value="2"/>
</dbReference>
<dbReference type="PROSITE" id="PS01254">
    <property type="entry name" value="FETUIN_1"/>
    <property type="match status" value="1"/>
</dbReference>
<dbReference type="PROSITE" id="PS01255">
    <property type="entry name" value="FETUIN_2"/>
    <property type="match status" value="1"/>
</dbReference>
<name>FETUA_SHEEP</name>
<organism>
    <name type="scientific">Ovis aries</name>
    <name type="common">Sheep</name>
    <dbReference type="NCBI Taxonomy" id="9940"/>
    <lineage>
        <taxon>Eukaryota</taxon>
        <taxon>Metazoa</taxon>
        <taxon>Chordata</taxon>
        <taxon>Craniata</taxon>
        <taxon>Vertebrata</taxon>
        <taxon>Euteleostomi</taxon>
        <taxon>Mammalia</taxon>
        <taxon>Eutheria</taxon>
        <taxon>Laurasiatheria</taxon>
        <taxon>Artiodactyla</taxon>
        <taxon>Ruminantia</taxon>
        <taxon>Pecora</taxon>
        <taxon>Bovidae</taxon>
        <taxon>Caprinae</taxon>
        <taxon>Ovis</taxon>
    </lineage>
</organism>
<comment type="subcellular location">
    <subcellularLocation>
        <location>Secreted</location>
    </subcellularLocation>
</comment>
<comment type="PTM">
    <text evidence="1">Phosphorylated by FAM20C in the extracellular medium.</text>
</comment>
<comment type="similarity">
    <text evidence="5">Belongs to the fetuin family.</text>
</comment>
<gene>
    <name type="primary">AHSG</name>
    <name type="synonym">FETUA</name>
</gene>
<keyword id="KW-0903">Direct protein sequencing</keyword>
<keyword id="KW-1015">Disulfide bond</keyword>
<keyword id="KW-0325">Glycoprotein</keyword>
<keyword id="KW-0597">Phosphoprotein</keyword>
<keyword id="KW-1185">Reference proteome</keyword>
<keyword id="KW-0677">Repeat</keyword>
<keyword id="KW-0964">Secreted</keyword>
<keyword id="KW-0732">Signal</keyword>
<proteinExistence type="evidence at protein level"/>